<name>ZN608_HUMAN</name>
<organism>
    <name type="scientific">Homo sapiens</name>
    <name type="common">Human</name>
    <dbReference type="NCBI Taxonomy" id="9606"/>
    <lineage>
        <taxon>Eukaryota</taxon>
        <taxon>Metazoa</taxon>
        <taxon>Chordata</taxon>
        <taxon>Craniata</taxon>
        <taxon>Vertebrata</taxon>
        <taxon>Euteleostomi</taxon>
        <taxon>Mammalia</taxon>
        <taxon>Eutheria</taxon>
        <taxon>Euarchontoglires</taxon>
        <taxon>Primates</taxon>
        <taxon>Haplorrhini</taxon>
        <taxon>Catarrhini</taxon>
        <taxon>Hominidae</taxon>
        <taxon>Homo</taxon>
    </lineage>
</organism>
<feature type="chain" id="PRO_0000280420" description="Zinc finger protein 608">
    <location>
        <begin position="1"/>
        <end position="1512"/>
    </location>
</feature>
<feature type="zinc finger region" description="C2H2-type">
    <location>
        <begin position="553"/>
        <end position="578"/>
    </location>
</feature>
<feature type="region of interest" description="Disordered" evidence="3">
    <location>
        <begin position="1"/>
        <end position="23"/>
    </location>
</feature>
<feature type="region of interest" description="Disordered" evidence="3">
    <location>
        <begin position="46"/>
        <end position="74"/>
    </location>
</feature>
<feature type="region of interest" description="Disordered" evidence="3">
    <location>
        <begin position="89"/>
        <end position="237"/>
    </location>
</feature>
<feature type="region of interest" description="Disordered" evidence="3">
    <location>
        <begin position="260"/>
        <end position="295"/>
    </location>
</feature>
<feature type="region of interest" description="Disordered" evidence="3">
    <location>
        <begin position="417"/>
        <end position="545"/>
    </location>
</feature>
<feature type="region of interest" description="Disordered" evidence="3">
    <location>
        <begin position="622"/>
        <end position="665"/>
    </location>
</feature>
<feature type="region of interest" description="Disordered" evidence="3">
    <location>
        <begin position="713"/>
        <end position="750"/>
    </location>
</feature>
<feature type="region of interest" description="Disordered" evidence="3">
    <location>
        <begin position="777"/>
        <end position="858"/>
    </location>
</feature>
<feature type="region of interest" description="Disordered" evidence="3">
    <location>
        <begin position="925"/>
        <end position="996"/>
    </location>
</feature>
<feature type="region of interest" description="Disordered" evidence="3">
    <location>
        <begin position="1011"/>
        <end position="1066"/>
    </location>
</feature>
<feature type="region of interest" description="Disordered" evidence="3">
    <location>
        <begin position="1117"/>
        <end position="1192"/>
    </location>
</feature>
<feature type="region of interest" description="Disordered" evidence="3">
    <location>
        <begin position="1220"/>
        <end position="1335"/>
    </location>
</feature>
<feature type="region of interest" description="Disordered" evidence="3">
    <location>
        <begin position="1423"/>
        <end position="1459"/>
    </location>
</feature>
<feature type="coiled-coil region" evidence="2">
    <location>
        <begin position="278"/>
        <end position="304"/>
    </location>
</feature>
<feature type="compositionally biased region" description="Low complexity" evidence="3">
    <location>
        <begin position="51"/>
        <end position="74"/>
    </location>
</feature>
<feature type="compositionally biased region" description="Low complexity" evidence="3">
    <location>
        <begin position="151"/>
        <end position="185"/>
    </location>
</feature>
<feature type="compositionally biased region" description="Basic and acidic residues" evidence="3">
    <location>
        <begin position="201"/>
        <end position="218"/>
    </location>
</feature>
<feature type="compositionally biased region" description="Polar residues" evidence="3">
    <location>
        <begin position="220"/>
        <end position="230"/>
    </location>
</feature>
<feature type="compositionally biased region" description="Low complexity" evidence="3">
    <location>
        <begin position="260"/>
        <end position="270"/>
    </location>
</feature>
<feature type="compositionally biased region" description="Polar residues" evidence="3">
    <location>
        <begin position="449"/>
        <end position="458"/>
    </location>
</feature>
<feature type="compositionally biased region" description="Polar residues" evidence="3">
    <location>
        <begin position="526"/>
        <end position="535"/>
    </location>
</feature>
<feature type="compositionally biased region" description="Basic and acidic residues" evidence="3">
    <location>
        <begin position="713"/>
        <end position="729"/>
    </location>
</feature>
<feature type="compositionally biased region" description="Pro residues" evidence="3">
    <location>
        <begin position="781"/>
        <end position="790"/>
    </location>
</feature>
<feature type="compositionally biased region" description="Basic and acidic residues" evidence="3">
    <location>
        <begin position="818"/>
        <end position="858"/>
    </location>
</feature>
<feature type="compositionally biased region" description="Polar residues" evidence="3">
    <location>
        <begin position="925"/>
        <end position="934"/>
    </location>
</feature>
<feature type="compositionally biased region" description="Low complexity" evidence="3">
    <location>
        <begin position="960"/>
        <end position="973"/>
    </location>
</feature>
<feature type="compositionally biased region" description="Polar residues" evidence="3">
    <location>
        <begin position="979"/>
        <end position="989"/>
    </location>
</feature>
<feature type="compositionally biased region" description="Basic and acidic residues" evidence="3">
    <location>
        <begin position="1030"/>
        <end position="1054"/>
    </location>
</feature>
<feature type="compositionally biased region" description="Polar residues" evidence="3">
    <location>
        <begin position="1055"/>
        <end position="1066"/>
    </location>
</feature>
<feature type="compositionally biased region" description="Basic and acidic residues" evidence="3">
    <location>
        <begin position="1125"/>
        <end position="1145"/>
    </location>
</feature>
<feature type="compositionally biased region" description="Polar residues" evidence="3">
    <location>
        <begin position="1146"/>
        <end position="1157"/>
    </location>
</feature>
<feature type="compositionally biased region" description="Low complexity" evidence="3">
    <location>
        <begin position="1183"/>
        <end position="1192"/>
    </location>
</feature>
<feature type="compositionally biased region" description="Basic and acidic residues" evidence="3">
    <location>
        <begin position="1231"/>
        <end position="1241"/>
    </location>
</feature>
<feature type="compositionally biased region" description="Basic and acidic residues" evidence="3">
    <location>
        <begin position="1253"/>
        <end position="1276"/>
    </location>
</feature>
<feature type="compositionally biased region" description="Basic and acidic residues" evidence="3">
    <location>
        <begin position="1291"/>
        <end position="1327"/>
    </location>
</feature>
<feature type="compositionally biased region" description="Basic and acidic residues" evidence="3">
    <location>
        <begin position="1437"/>
        <end position="1453"/>
    </location>
</feature>
<feature type="modified residue" description="Phosphoserine" evidence="1">
    <location>
        <position position="421"/>
    </location>
</feature>
<feature type="modified residue" description="Phosphoserine" evidence="1">
    <location>
        <position position="424"/>
    </location>
</feature>
<feature type="modified residue" description="Phosphothreonine" evidence="1">
    <location>
        <position position="481"/>
    </location>
</feature>
<feature type="modified residue" description="Phosphoserine" evidence="1">
    <location>
        <position position="493"/>
    </location>
</feature>
<feature type="modified residue" description="Phosphoserine" evidence="11 12">
    <location>
        <position position="627"/>
    </location>
</feature>
<feature type="modified residue" description="Phosphoserine" evidence="10">
    <location>
        <position position="782"/>
    </location>
</feature>
<feature type="modified residue" description="Phosphoserine" evidence="11">
    <location>
        <position position="895"/>
    </location>
</feature>
<feature type="modified residue" description="Phosphoserine" evidence="10 11">
    <location>
        <position position="964"/>
    </location>
</feature>
<feature type="modified residue" description="Phosphoserine" evidence="11">
    <location>
        <position position="1098"/>
    </location>
</feature>
<feature type="cross-link" description="Glycyl lysine isopeptide (Lys-Gly) (interchain with G-Cter in SUMO2)" evidence="14">
    <location>
        <position position="283"/>
    </location>
</feature>
<feature type="cross-link" description="Glycyl lysine isopeptide (Lys-Gly) (interchain with G-Cter in SUMO2)" evidence="13 14">
    <location>
        <position position="880"/>
    </location>
</feature>
<feature type="cross-link" description="Glycyl lysine isopeptide (Lys-Gly) (interchain with G-Cter in SUMO2)" evidence="14">
    <location>
        <position position="1118"/>
    </location>
</feature>
<feature type="cross-link" description="Glycyl lysine isopeptide (Lys-Gly) (interchain with G-Cter in SUMO2)" evidence="14">
    <location>
        <position position="1176"/>
    </location>
</feature>
<feature type="cross-link" description="Glycyl lysine isopeptide (Lys-Gly) (interchain with G-Cter in SUMO2)" evidence="14">
    <location>
        <position position="1182"/>
    </location>
</feature>
<feature type="cross-link" description="Glycyl lysine isopeptide (Lys-Gly) (interchain with G-Cter in SUMO2)" evidence="14">
    <location>
        <position position="1199"/>
    </location>
</feature>
<feature type="cross-link" description="Glycyl lysine isopeptide (Lys-Gly) (interchain with G-Cter in SUMO2)" evidence="14">
    <location>
        <position position="1216"/>
    </location>
</feature>
<feature type="cross-link" description="Glycyl lysine isopeptide (Lys-Gly) (interchain with G-Cter in SUMO2)" evidence="14">
    <location>
        <position position="1234"/>
    </location>
</feature>
<feature type="cross-link" description="Glycyl lysine isopeptide (Lys-Gly) (interchain with G-Cter in SUMO2)" evidence="14">
    <location>
        <position position="1250"/>
    </location>
</feature>
<feature type="cross-link" description="Glycyl lysine isopeptide (Lys-Gly) (interchain with G-Cter in SUMO2)" evidence="13 14">
    <location>
        <position position="1292"/>
    </location>
</feature>
<feature type="cross-link" description="Glycyl lysine isopeptide (Lys-Gly) (interchain with G-Cter in SUMO2)" evidence="14">
    <location>
        <position position="1310"/>
    </location>
</feature>
<feature type="cross-link" description="Glycyl lysine isopeptide (Lys-Gly) (interchain with G-Cter in SUMO2)" evidence="14">
    <location>
        <position position="1414"/>
    </location>
</feature>
<feature type="splice variant" id="VSP_023664" description="In isoform 2." evidence="8">
    <location>
        <begin position="1"/>
        <end position="427"/>
    </location>
</feature>
<feature type="sequence variant" id="VAR_031148" description="In dbSNP:rs6862252." evidence="4 5 6 7">
    <original>T</original>
    <variation>N</variation>
    <location>
        <position position="721"/>
    </location>
</feature>
<feature type="sequence conflict" description="In Ref. 3; CAH18418." evidence="9" ref="3">
    <original>E</original>
    <variation>G</variation>
    <location>
        <position position="1512"/>
    </location>
</feature>
<protein>
    <recommendedName>
        <fullName>Zinc finger protein 608</fullName>
    </recommendedName>
    <alternativeName>
        <fullName>Renal carcinoma antigen NY-REN-36</fullName>
    </alternativeName>
</protein>
<evidence type="ECO:0000250" key="1">
    <source>
        <dbReference type="UniProtKB" id="Q56A10"/>
    </source>
</evidence>
<evidence type="ECO:0000255" key="2"/>
<evidence type="ECO:0000256" key="3">
    <source>
        <dbReference type="SAM" id="MobiDB-lite"/>
    </source>
</evidence>
<evidence type="ECO:0000269" key="4">
    <source>
    </source>
</evidence>
<evidence type="ECO:0000269" key="5">
    <source>
    </source>
</evidence>
<evidence type="ECO:0000269" key="6">
    <source>
    </source>
</evidence>
<evidence type="ECO:0000269" key="7">
    <source>
    </source>
</evidence>
<evidence type="ECO:0000303" key="8">
    <source>
    </source>
</evidence>
<evidence type="ECO:0000305" key="9"/>
<evidence type="ECO:0007744" key="10">
    <source>
    </source>
</evidence>
<evidence type="ECO:0007744" key="11">
    <source>
    </source>
</evidence>
<evidence type="ECO:0007744" key="12">
    <source>
    </source>
</evidence>
<evidence type="ECO:0007744" key="13">
    <source>
    </source>
</evidence>
<evidence type="ECO:0007744" key="14">
    <source>
    </source>
</evidence>
<proteinExistence type="evidence at protein level"/>
<gene>
    <name type="primary">ZNF608</name>
    <name type="synonym">KIAA1281</name>
</gene>
<reference key="1">
    <citation type="journal article" date="1999" name="DNA Res.">
        <title>Prediction of the coding sequences of unidentified human genes. XV. The complete sequences of 100 new cDNA clones from brain which code for large proteins in vitro.</title>
        <authorList>
            <person name="Nagase T."/>
            <person name="Ishikawa K."/>
            <person name="Kikuno R."/>
            <person name="Hirosawa M."/>
            <person name="Nomura N."/>
            <person name="Ohara O."/>
        </authorList>
    </citation>
    <scope>NUCLEOTIDE SEQUENCE [LARGE SCALE MRNA] (ISOFORM 1)</scope>
    <scope>VARIANT ASN-721</scope>
    <source>
        <tissue>Brain</tissue>
    </source>
</reference>
<reference key="2">
    <citation type="journal article" date="2002" name="DNA Res.">
        <title>Construction of expression-ready cDNA clones for KIAA genes: manual curation of 330 KIAA cDNA clones.</title>
        <authorList>
            <person name="Nakajima D."/>
            <person name="Okazaki N."/>
            <person name="Yamakawa H."/>
            <person name="Kikuno R."/>
            <person name="Ohara O."/>
            <person name="Nagase T."/>
        </authorList>
    </citation>
    <scope>SEQUENCE REVISION</scope>
</reference>
<reference key="3">
    <citation type="journal article" date="2007" name="BMC Genomics">
        <title>The full-ORF clone resource of the German cDNA consortium.</title>
        <authorList>
            <person name="Bechtel S."/>
            <person name="Rosenfelder H."/>
            <person name="Duda A."/>
            <person name="Schmidt C.P."/>
            <person name="Ernst U."/>
            <person name="Wellenreuther R."/>
            <person name="Mehrle A."/>
            <person name="Schuster C."/>
            <person name="Bahr A."/>
            <person name="Bloecker H."/>
            <person name="Heubner D."/>
            <person name="Hoerlein A."/>
            <person name="Michel G."/>
            <person name="Wedler H."/>
            <person name="Koehrer K."/>
            <person name="Ottenwaelder B."/>
            <person name="Poustka A."/>
            <person name="Wiemann S."/>
            <person name="Schupp I."/>
        </authorList>
    </citation>
    <scope>NUCLEOTIDE SEQUENCE [LARGE SCALE MRNA] (ISOFORM 2)</scope>
    <scope>VARIANT ASN-721</scope>
    <source>
        <tissue>Testis</tissue>
    </source>
</reference>
<reference key="4">
    <citation type="journal article" date="2004" name="Nature">
        <title>The DNA sequence and comparative analysis of human chromosome 5.</title>
        <authorList>
            <person name="Schmutz J."/>
            <person name="Martin J."/>
            <person name="Terry A."/>
            <person name="Couronne O."/>
            <person name="Grimwood J."/>
            <person name="Lowry S."/>
            <person name="Gordon L.A."/>
            <person name="Scott D."/>
            <person name="Xie G."/>
            <person name="Huang W."/>
            <person name="Hellsten U."/>
            <person name="Tran-Gyamfi M."/>
            <person name="She X."/>
            <person name="Prabhakar S."/>
            <person name="Aerts A."/>
            <person name="Altherr M."/>
            <person name="Bajorek E."/>
            <person name="Black S."/>
            <person name="Branscomb E."/>
            <person name="Caoile C."/>
            <person name="Challacombe J.F."/>
            <person name="Chan Y.M."/>
            <person name="Denys M."/>
            <person name="Detter J.C."/>
            <person name="Escobar J."/>
            <person name="Flowers D."/>
            <person name="Fotopulos D."/>
            <person name="Glavina T."/>
            <person name="Gomez M."/>
            <person name="Gonzales E."/>
            <person name="Goodstein D."/>
            <person name="Grigoriev I."/>
            <person name="Groza M."/>
            <person name="Hammon N."/>
            <person name="Hawkins T."/>
            <person name="Haydu L."/>
            <person name="Israni S."/>
            <person name="Jett J."/>
            <person name="Kadner K."/>
            <person name="Kimball H."/>
            <person name="Kobayashi A."/>
            <person name="Lopez F."/>
            <person name="Lou Y."/>
            <person name="Martinez D."/>
            <person name="Medina C."/>
            <person name="Morgan J."/>
            <person name="Nandkeshwar R."/>
            <person name="Noonan J.P."/>
            <person name="Pitluck S."/>
            <person name="Pollard M."/>
            <person name="Predki P."/>
            <person name="Priest J."/>
            <person name="Ramirez L."/>
            <person name="Retterer J."/>
            <person name="Rodriguez A."/>
            <person name="Rogers S."/>
            <person name="Salamov A."/>
            <person name="Salazar A."/>
            <person name="Thayer N."/>
            <person name="Tice H."/>
            <person name="Tsai M."/>
            <person name="Ustaszewska A."/>
            <person name="Vo N."/>
            <person name="Wheeler J."/>
            <person name="Wu K."/>
            <person name="Yang J."/>
            <person name="Dickson M."/>
            <person name="Cheng J.-F."/>
            <person name="Eichler E.E."/>
            <person name="Olsen A."/>
            <person name="Pennacchio L.A."/>
            <person name="Rokhsar D.S."/>
            <person name="Richardson P."/>
            <person name="Lucas S.M."/>
            <person name="Myers R.M."/>
            <person name="Rubin E.M."/>
        </authorList>
    </citation>
    <scope>NUCLEOTIDE SEQUENCE [LARGE SCALE GENOMIC DNA]</scope>
</reference>
<reference key="5">
    <citation type="journal article" date="2004" name="Genome Res.">
        <title>The status, quality, and expansion of the NIH full-length cDNA project: the Mammalian Gene Collection (MGC).</title>
        <authorList>
            <consortium name="The MGC Project Team"/>
        </authorList>
    </citation>
    <scope>NUCLEOTIDE SEQUENCE [LARGE SCALE MRNA] (ISOFORM 1)</scope>
    <scope>VARIANT ASN-721</scope>
    <source>
        <tissue>PNS</tissue>
        <tissue>Skin</tissue>
    </source>
</reference>
<reference key="6">
    <citation type="journal article" date="1999" name="Int. J. Cancer">
        <title>Antigens recognized by autologous antibody in patients with renal-cell carcinoma.</title>
        <authorList>
            <person name="Scanlan M.J."/>
            <person name="Gordan J.D."/>
            <person name="Williamson B."/>
            <person name="Stockert E."/>
            <person name="Bander N.H."/>
            <person name="Jongeneel C.V."/>
            <person name="Gure A.O."/>
            <person name="Jaeger D."/>
            <person name="Jaeger E."/>
            <person name="Knuth A."/>
            <person name="Chen Y.-T."/>
            <person name="Old L.J."/>
        </authorList>
    </citation>
    <scope>NUCLEOTIDE SEQUENCE [MRNA] OF 584-810</scope>
    <scope>IDENTIFICATION AS A RENAL CANCER ANTIGEN</scope>
    <scope>VARIANT ASN-721</scope>
    <source>
        <tissue>Renal cell carcinoma</tissue>
    </source>
</reference>
<reference key="7">
    <citation type="journal article" date="2007" name="Science">
        <title>ATM and ATR substrate analysis reveals extensive protein networks responsive to DNA damage.</title>
        <authorList>
            <person name="Matsuoka S."/>
            <person name="Ballif B.A."/>
            <person name="Smogorzewska A."/>
            <person name="McDonald E.R. III"/>
            <person name="Hurov K.E."/>
            <person name="Luo J."/>
            <person name="Bakalarski C.E."/>
            <person name="Zhao Z."/>
            <person name="Solimini N."/>
            <person name="Lerenthal Y."/>
            <person name="Shiloh Y."/>
            <person name="Gygi S.P."/>
            <person name="Elledge S.J."/>
        </authorList>
    </citation>
    <scope>IDENTIFICATION BY MASS SPECTROMETRY [LARGE SCALE ANALYSIS]</scope>
    <source>
        <tissue>Embryonic kidney</tissue>
    </source>
</reference>
<reference key="8">
    <citation type="journal article" date="2009" name="Anal. Chem.">
        <title>Lys-N and trypsin cover complementary parts of the phosphoproteome in a refined SCX-based approach.</title>
        <authorList>
            <person name="Gauci S."/>
            <person name="Helbig A.O."/>
            <person name="Slijper M."/>
            <person name="Krijgsveld J."/>
            <person name="Heck A.J."/>
            <person name="Mohammed S."/>
        </authorList>
    </citation>
    <scope>IDENTIFICATION BY MASS SPECTROMETRY [LARGE SCALE ANALYSIS]</scope>
</reference>
<reference key="9">
    <citation type="journal article" date="2011" name="Sci. Signal.">
        <title>System-wide temporal characterization of the proteome and phosphoproteome of human embryonic stem cell differentiation.</title>
        <authorList>
            <person name="Rigbolt K.T."/>
            <person name="Prokhorova T.A."/>
            <person name="Akimov V."/>
            <person name="Henningsen J."/>
            <person name="Johansen P.T."/>
            <person name="Kratchmarova I."/>
            <person name="Kassem M."/>
            <person name="Mann M."/>
            <person name="Olsen J.V."/>
            <person name="Blagoev B."/>
        </authorList>
    </citation>
    <scope>PHOSPHORYLATION [LARGE SCALE ANALYSIS] AT SER-782 AND SER-964</scope>
    <scope>IDENTIFICATION BY MASS SPECTROMETRY [LARGE SCALE ANALYSIS]</scope>
</reference>
<reference key="10">
    <citation type="journal article" date="2013" name="J. Proteome Res.">
        <title>Toward a comprehensive characterization of a human cancer cell phosphoproteome.</title>
        <authorList>
            <person name="Zhou H."/>
            <person name="Di Palma S."/>
            <person name="Preisinger C."/>
            <person name="Peng M."/>
            <person name="Polat A.N."/>
            <person name="Heck A.J."/>
            <person name="Mohammed S."/>
        </authorList>
    </citation>
    <scope>PHOSPHORYLATION [LARGE SCALE ANALYSIS] AT SER-627; SER-895; SER-964 AND SER-1098</scope>
    <scope>IDENTIFICATION BY MASS SPECTROMETRY [LARGE SCALE ANALYSIS]</scope>
    <source>
        <tissue>Erythroleukemia</tissue>
    </source>
</reference>
<reference key="11">
    <citation type="journal article" date="2014" name="J. Proteomics">
        <title>An enzyme assisted RP-RPLC approach for in-depth analysis of human liver phosphoproteome.</title>
        <authorList>
            <person name="Bian Y."/>
            <person name="Song C."/>
            <person name="Cheng K."/>
            <person name="Dong M."/>
            <person name="Wang F."/>
            <person name="Huang J."/>
            <person name="Sun D."/>
            <person name="Wang L."/>
            <person name="Ye M."/>
            <person name="Zou H."/>
        </authorList>
    </citation>
    <scope>PHOSPHORYLATION [LARGE SCALE ANALYSIS] AT SER-627</scope>
    <scope>IDENTIFICATION BY MASS SPECTROMETRY [LARGE SCALE ANALYSIS]</scope>
    <source>
        <tissue>Liver</tissue>
    </source>
</reference>
<reference key="12">
    <citation type="journal article" date="2015" name="Mol. Cell. Proteomics">
        <title>System-wide analysis of SUMOylation dynamics in response to replication stress reveals novel small ubiquitin-like modified target proteins and acceptor lysines relevant for genome stability.</title>
        <authorList>
            <person name="Xiao Z."/>
            <person name="Chang J.G."/>
            <person name="Hendriks I.A."/>
            <person name="Sigurdsson J.O."/>
            <person name="Olsen J.V."/>
            <person name="Vertegaal A.C."/>
        </authorList>
    </citation>
    <scope>SUMOYLATION [LARGE SCALE ANALYSIS] AT LYS-880 AND LYS-1292</scope>
    <scope>IDENTIFICATION BY MASS SPECTROMETRY [LARGE SCALE ANALYSIS]</scope>
</reference>
<reference key="13">
    <citation type="journal article" date="2017" name="Nat. Struct. Mol. Biol.">
        <title>Site-specific mapping of the human SUMO proteome reveals co-modification with phosphorylation.</title>
        <authorList>
            <person name="Hendriks I.A."/>
            <person name="Lyon D."/>
            <person name="Young C."/>
            <person name="Jensen L.J."/>
            <person name="Vertegaal A.C."/>
            <person name="Nielsen M.L."/>
        </authorList>
    </citation>
    <scope>SUMOYLATION [LARGE SCALE ANALYSIS] AT LYS-283; LYS-880; LYS-1118; LYS-1176; LYS-1182; LYS-1199; LYS-1216; LYS-1234; LYS-1250; LYS-1292; LYS-1310 AND LYS-1414</scope>
    <scope>IDENTIFICATION BY MASS SPECTROMETRY [LARGE SCALE ANALYSIS]</scope>
</reference>
<sequence>MSVNISTAGKGVDPNTVDTYDSGDDWEIGVGNLIIDLDADLEKDRQKFEMNNSTTTTSSSNSKDCGGPASSGAGATAALADGLKFASVQASAPQGNSHKETSKSKVKRSKTSKDANKSLPSAALYGIPEISSTGKRQEVQGRPGEATGMNSALGQSVSSGGSGNPNSNSTSTSTSAATAGAGSCGKSKEEKPGKSQSSRGAKRDKDAGKSRKDKHDLLQGHQNGSGSQAPSGGHLYGFGAKSNGGGASPFHCGGTGSGSVAAAGEVSKSAPDSGLMGNSMLVKKEEEEEESHRRIKKLKTEKVDPLFTVPAPPPPISSSLTPQILPSYFSPSSSNIAAPVEQLLVRTRSVGVNTCEVGVVTEPECLGPCEPGTSVNLEGIVWHETEEGVLVVNVTWRNKTYVGTLLDCTKHDWAPPRFCESPTSDLEMRGGRGRGKRARSAAAAPGSEASFTESRGLQNKNRGGANGKGRRGSLNASGRRTPPNCAAEDIKASPSSTNKRKNKPPMELDLNSSSEDNKPGKRVRTNSRSTPTTPQGKPETTFLDQGCSSPVLIDCPHPNCNKKYKHINGLRYHQAHAHLDPENKLEFEPDSEDKISDCEEGLSNVALECSEPSTSVSAYDQLKAPASPGAGNPPGTPKGKRELMSNGPGSIIGAKAGKNSGKKKGLNNELNNLPVISNMTAALDSCSAADGSLAAEMPKLEAEGLIDKKNLGDKEKGKKATNCKTDKNLSKLKSARPIAPAPAPTPPQLIAIPTATFTTTTTGTIPGLPSLTTTVVQATPKSPPLKPIQPKPTIMGEPITVNPALVSLKDKKKKEKRKLKDKEGKETGSPKMDAKLGKLEDSKGASKDLPGHFLKDHLNKNEGLANGLSESQESRMASIKAEADKVYTFTDNAPSPSIGSASRLECSTLVNGQAPMAPLHVLTQNGAESSAAKTSSPAYSDISDAADDGGSDSRSEGMRSKASSPSDIISSKDSVVKGHSSTTAQSSQLKESHSPYYHSYDPYYSPSYMHPGQVGAPAAGNSGSTQGMKIKKESEEDAEKKDKAEQLDSKKVDHNSASLQPQHQSVITQRHPALAQSLYYGQYAYGLYMDQKSLMATSPAYRQQYEKYYEDQRLAEQKMAQTGRGDCERKSELPLKELGKEETKQKNMPSATISKAPSTPEPNKNHSKLGPSVPNKTEETGKSQLLSNHQQQLQADSFKAKQMENHQLIKEAVEMKSVMDSMKQTGVDPTSRFKQDPDSRTWHHYVYQPKYLDQQKSEELDREKKLKEDSPRKTPNKESGVPSLPVSLTSIKEEPKEAKHPDSQSMEESKLKNDDRKTPVNWKDSRGTRVAVSSPMSQHQSYIQYLHAYPYPQMYDPSHPAYRAVSPVLMHSYPGAYLSPGFHYPVYGKMSGREETEKVNTSPSVNTKTTTESKALDLLQQHANQYRSKSPAPVEKATAEREREAERERDRHSPFGQRHLHTHHHTHVGMGYPLIPGQYDPFQGLTSAALVASQQVAAQASASGMFPGQRRE</sequence>
<accession>Q9ULD9</accession>
<accession>A7E2W9</accession>
<accession>Q3SYM6</accession>
<accession>Q68D12</accession>
<accession>Q8IY05</accession>
<accession>Q9Y5A1</accession>
<comment type="function">
    <text evidence="1">Transcription factor, which represses ZNF609 transcription.</text>
</comment>
<comment type="alternative products">
    <event type="alternative splicing"/>
    <isoform>
        <id>Q9ULD9-1</id>
        <name>1</name>
        <sequence type="displayed"/>
    </isoform>
    <isoform>
        <id>Q9ULD9-2</id>
        <name>2</name>
        <sequence type="described" ref="VSP_023664"/>
    </isoform>
</comment>
<comment type="sequence caution" evidence="9">
    <conflict type="erroneous initiation">
        <sequence resource="EMBL-CDS" id="BAA86595"/>
    </conflict>
    <text>Extended N-terminus.</text>
</comment>
<dbReference type="EMBL" id="AB033107">
    <property type="protein sequence ID" value="BAA86595.2"/>
    <property type="status" value="ALT_INIT"/>
    <property type="molecule type" value="mRNA"/>
</dbReference>
<dbReference type="EMBL" id="CR749624">
    <property type="protein sequence ID" value="CAH18418.1"/>
    <property type="molecule type" value="mRNA"/>
</dbReference>
<dbReference type="EMBL" id="AC112196">
    <property type="status" value="NOT_ANNOTATED_CDS"/>
    <property type="molecule type" value="Genomic_DNA"/>
</dbReference>
<dbReference type="EMBL" id="AC113398">
    <property type="status" value="NOT_ANNOTATED_CDS"/>
    <property type="molecule type" value="Genomic_DNA"/>
</dbReference>
<dbReference type="EMBL" id="BC038370">
    <property type="protein sequence ID" value="AAH38370.1"/>
    <property type="molecule type" value="mRNA"/>
</dbReference>
<dbReference type="EMBL" id="BC103742">
    <property type="protein sequence ID" value="AAI03743.1"/>
    <property type="molecule type" value="mRNA"/>
</dbReference>
<dbReference type="EMBL" id="BC151226">
    <property type="protein sequence ID" value="AAI51227.1"/>
    <property type="molecule type" value="mRNA"/>
</dbReference>
<dbReference type="EMBL" id="AF155106">
    <property type="protein sequence ID" value="AAD42872.1"/>
    <property type="molecule type" value="mRNA"/>
</dbReference>
<dbReference type="CCDS" id="CCDS34219.1">
    <molecule id="Q9ULD9-1"/>
</dbReference>
<dbReference type="RefSeq" id="NP_001372548.1">
    <molecule id="Q9ULD9-1"/>
    <property type="nucleotide sequence ID" value="NM_001385619.1"/>
</dbReference>
<dbReference type="RefSeq" id="NP_065798.2">
    <molecule id="Q9ULD9-1"/>
    <property type="nucleotide sequence ID" value="NM_020747.3"/>
</dbReference>
<dbReference type="RefSeq" id="XP_005272094.1">
    <property type="nucleotide sequence ID" value="XM_005272037.2"/>
</dbReference>
<dbReference type="RefSeq" id="XP_005272095.1">
    <property type="nucleotide sequence ID" value="XM_005272038.1"/>
</dbReference>
<dbReference type="RefSeq" id="XP_047273404.1">
    <molecule id="Q9ULD9-2"/>
    <property type="nucleotide sequence ID" value="XM_047417448.1"/>
</dbReference>
<dbReference type="SMR" id="Q9ULD9"/>
<dbReference type="BioGRID" id="121571">
    <property type="interactions" value="90"/>
</dbReference>
<dbReference type="DIP" id="DIP-29419N"/>
<dbReference type="FunCoup" id="Q9ULD9">
    <property type="interactions" value="1492"/>
</dbReference>
<dbReference type="IntAct" id="Q9ULD9">
    <property type="interactions" value="48"/>
</dbReference>
<dbReference type="MINT" id="Q9ULD9"/>
<dbReference type="STRING" id="9606.ENSP00000307746"/>
<dbReference type="GlyGen" id="Q9ULD9">
    <property type="glycosylation" value="4 sites, 2 N-linked glycans (2 sites), 1 O-linked glycan (1 site)"/>
</dbReference>
<dbReference type="iPTMnet" id="Q9ULD9"/>
<dbReference type="PhosphoSitePlus" id="Q9ULD9"/>
<dbReference type="BioMuta" id="ZNF608"/>
<dbReference type="DMDM" id="296453083"/>
<dbReference type="jPOST" id="Q9ULD9"/>
<dbReference type="MassIVE" id="Q9ULD9"/>
<dbReference type="PaxDb" id="9606-ENSP00000307746"/>
<dbReference type="PeptideAtlas" id="Q9ULD9"/>
<dbReference type="ProteomicsDB" id="85004">
    <molecule id="Q9ULD9-1"/>
</dbReference>
<dbReference type="ProteomicsDB" id="85005">
    <molecule id="Q9ULD9-2"/>
</dbReference>
<dbReference type="Pumba" id="Q9ULD9"/>
<dbReference type="Antibodypedia" id="1014">
    <property type="antibodies" value="87 antibodies from 25 providers"/>
</dbReference>
<dbReference type="DNASU" id="57507"/>
<dbReference type="Ensembl" id="ENST00000306315.9">
    <molecule id="Q9ULD9-1"/>
    <property type="protein sequence ID" value="ENSP00000307746.5"/>
    <property type="gene ID" value="ENSG00000168916.16"/>
</dbReference>
<dbReference type="Ensembl" id="ENST00000504926.5">
    <molecule id="Q9ULD9-2"/>
    <property type="protein sequence ID" value="ENSP00000427657.1"/>
    <property type="gene ID" value="ENSG00000168916.16"/>
</dbReference>
<dbReference type="Ensembl" id="ENST00000513986.2">
    <molecule id="Q9ULD9-1"/>
    <property type="protein sequence ID" value="ENSP00000421899.2"/>
    <property type="gene ID" value="ENSG00000168916.16"/>
</dbReference>
<dbReference type="GeneID" id="57507"/>
<dbReference type="KEGG" id="hsa:57507"/>
<dbReference type="MANE-Select" id="ENST00000513986.2">
    <property type="protein sequence ID" value="ENSP00000421899.2"/>
    <property type="RefSeq nucleotide sequence ID" value="NM_020747.3"/>
    <property type="RefSeq protein sequence ID" value="NP_065798.2"/>
</dbReference>
<dbReference type="UCSC" id="uc003ktq.2">
    <molecule id="Q9ULD9-1"/>
    <property type="organism name" value="human"/>
</dbReference>
<dbReference type="AGR" id="HGNC:29238"/>
<dbReference type="CTD" id="57507"/>
<dbReference type="DisGeNET" id="57507"/>
<dbReference type="GeneCards" id="ZNF608"/>
<dbReference type="HGNC" id="HGNC:29238">
    <property type="gene designation" value="ZNF608"/>
</dbReference>
<dbReference type="HPA" id="ENSG00000168916">
    <property type="expression patterns" value="Low tissue specificity"/>
</dbReference>
<dbReference type="MIM" id="620972">
    <property type="type" value="gene"/>
</dbReference>
<dbReference type="neXtProt" id="NX_Q9ULD9"/>
<dbReference type="OpenTargets" id="ENSG00000168916"/>
<dbReference type="PharmGKB" id="PA134945727"/>
<dbReference type="VEuPathDB" id="HostDB:ENSG00000168916"/>
<dbReference type="eggNOG" id="ENOG502QSUK">
    <property type="taxonomic scope" value="Eukaryota"/>
</dbReference>
<dbReference type="GeneTree" id="ENSGT00390000008748"/>
<dbReference type="HOGENOM" id="CLU_004142_1_0_1"/>
<dbReference type="InParanoid" id="Q9ULD9"/>
<dbReference type="OMA" id="PNCAMDE"/>
<dbReference type="OrthoDB" id="5863628at2759"/>
<dbReference type="PAN-GO" id="Q9ULD9">
    <property type="GO annotations" value="2 GO annotations based on evolutionary models"/>
</dbReference>
<dbReference type="PhylomeDB" id="Q9ULD9"/>
<dbReference type="TreeFam" id="TF329775"/>
<dbReference type="PathwayCommons" id="Q9ULD9"/>
<dbReference type="SignaLink" id="Q9ULD9"/>
<dbReference type="BioGRID-ORCS" id="57507">
    <property type="hits" value="12 hits in 1156 CRISPR screens"/>
</dbReference>
<dbReference type="ChiTaRS" id="ZNF608">
    <property type="organism name" value="human"/>
</dbReference>
<dbReference type="GenomeRNAi" id="57507"/>
<dbReference type="Pharos" id="Q9ULD9">
    <property type="development level" value="Tbio"/>
</dbReference>
<dbReference type="PRO" id="PR:Q9ULD9"/>
<dbReference type="Proteomes" id="UP000005640">
    <property type="component" value="Chromosome 5"/>
</dbReference>
<dbReference type="RNAct" id="Q9ULD9">
    <property type="molecule type" value="protein"/>
</dbReference>
<dbReference type="Bgee" id="ENSG00000168916">
    <property type="expression patterns" value="Expressed in cardiac muscle of right atrium and 165 other cell types or tissues"/>
</dbReference>
<dbReference type="ExpressionAtlas" id="Q9ULD9">
    <property type="expression patterns" value="baseline and differential"/>
</dbReference>
<dbReference type="GO" id="GO:0005634">
    <property type="term" value="C:nucleus"/>
    <property type="evidence" value="ECO:0000318"/>
    <property type="project" value="GO_Central"/>
</dbReference>
<dbReference type="GO" id="GO:0008270">
    <property type="term" value="F:zinc ion binding"/>
    <property type="evidence" value="ECO:0007669"/>
    <property type="project" value="UniProtKB-KW"/>
</dbReference>
<dbReference type="GO" id="GO:0000122">
    <property type="term" value="P:negative regulation of transcription by RNA polymerase II"/>
    <property type="evidence" value="ECO:0000250"/>
    <property type="project" value="UniProtKB"/>
</dbReference>
<dbReference type="GO" id="GO:0006357">
    <property type="term" value="P:regulation of transcription by RNA polymerase II"/>
    <property type="evidence" value="ECO:0000318"/>
    <property type="project" value="GO_Central"/>
</dbReference>
<dbReference type="InterPro" id="IPR040010">
    <property type="entry name" value="ZN608/ZN609"/>
</dbReference>
<dbReference type="InterPro" id="IPR013087">
    <property type="entry name" value="Znf_C2H2_type"/>
</dbReference>
<dbReference type="PANTHER" id="PTHR21564">
    <property type="entry name" value="BRAKELESS PROTEIN"/>
    <property type="match status" value="1"/>
</dbReference>
<dbReference type="PANTHER" id="PTHR21564:SF4">
    <property type="entry name" value="ZINC FINGER PROTEIN 608"/>
    <property type="match status" value="1"/>
</dbReference>
<dbReference type="PROSITE" id="PS00028">
    <property type="entry name" value="ZINC_FINGER_C2H2_1"/>
    <property type="match status" value="1"/>
</dbReference>
<keyword id="KW-0025">Alternative splicing</keyword>
<keyword id="KW-0175">Coiled coil</keyword>
<keyword id="KW-1017">Isopeptide bond</keyword>
<keyword id="KW-0479">Metal-binding</keyword>
<keyword id="KW-0597">Phosphoprotein</keyword>
<keyword id="KW-1267">Proteomics identification</keyword>
<keyword id="KW-1185">Reference proteome</keyword>
<keyword id="KW-0678">Repressor</keyword>
<keyword id="KW-0804">Transcription</keyword>
<keyword id="KW-0805">Transcription regulation</keyword>
<keyword id="KW-0832">Ubl conjugation</keyword>
<keyword id="KW-0862">Zinc</keyword>
<keyword id="KW-0863">Zinc-finger</keyword>